<comment type="function">
    <text evidence="1">Acts as a component of the peripheral membrane COG complex that is involved in intra-Golgi protein trafficking. COG is located at the cis-Golgi, and regulates tethering of retrograde intra-Golgi vesicles and possibly a number of other membrane trafficking events (By similarity).</text>
</comment>
<comment type="subcellular location">
    <subcellularLocation>
        <location evidence="1">Golgi apparatus membrane</location>
        <topology evidence="1">Peripheral membrane protein</topology>
    </subcellularLocation>
</comment>
<comment type="similarity">
    <text evidence="2">Belongs to the COG6 family.</text>
</comment>
<feature type="chain" id="PRO_0000339328" description="Conserved oligomeric Golgi complex subunit 6">
    <location>
        <begin position="1"/>
        <end position="747"/>
    </location>
</feature>
<protein>
    <recommendedName>
        <fullName>Conserved oligomeric Golgi complex subunit 6</fullName>
        <shortName>COG complex subunit 6</shortName>
    </recommendedName>
    <alternativeName>
        <fullName>Component of oligomeric Golgi complex 6</fullName>
    </alternativeName>
</protein>
<dbReference type="EMBL" id="CH408158">
    <property type="protein sequence ID" value="EDK39559.2"/>
    <property type="molecule type" value="Genomic_DNA"/>
</dbReference>
<dbReference type="RefSeq" id="XP_001484276.1">
    <property type="nucleotide sequence ID" value="XM_001484226.1"/>
</dbReference>
<dbReference type="SMR" id="A5DK56"/>
<dbReference type="FunCoup" id="A5DK56">
    <property type="interactions" value="264"/>
</dbReference>
<dbReference type="STRING" id="294746.A5DK56"/>
<dbReference type="GeneID" id="5126206"/>
<dbReference type="KEGG" id="pgu:PGUG_03657"/>
<dbReference type="VEuPathDB" id="FungiDB:PGUG_03657"/>
<dbReference type="eggNOG" id="KOG3758">
    <property type="taxonomic scope" value="Eukaryota"/>
</dbReference>
<dbReference type="HOGENOM" id="CLU_017837_0_0_1"/>
<dbReference type="InParanoid" id="A5DK56"/>
<dbReference type="OMA" id="HSCLDFF"/>
<dbReference type="OrthoDB" id="272987at2759"/>
<dbReference type="Proteomes" id="UP000001997">
    <property type="component" value="Unassembled WGS sequence"/>
</dbReference>
<dbReference type="GO" id="GO:0000139">
    <property type="term" value="C:Golgi membrane"/>
    <property type="evidence" value="ECO:0007669"/>
    <property type="project" value="UniProtKB-SubCell"/>
</dbReference>
<dbReference type="GO" id="GO:0017119">
    <property type="term" value="C:Golgi transport complex"/>
    <property type="evidence" value="ECO:0007669"/>
    <property type="project" value="InterPro"/>
</dbReference>
<dbReference type="GO" id="GO:0006891">
    <property type="term" value="P:intra-Golgi vesicle-mediated transport"/>
    <property type="evidence" value="ECO:0007669"/>
    <property type="project" value="InterPro"/>
</dbReference>
<dbReference type="GO" id="GO:0015031">
    <property type="term" value="P:protein transport"/>
    <property type="evidence" value="ECO:0007669"/>
    <property type="project" value="UniProtKB-KW"/>
</dbReference>
<dbReference type="InterPro" id="IPR010490">
    <property type="entry name" value="COG6"/>
</dbReference>
<dbReference type="InterPro" id="IPR048369">
    <property type="entry name" value="COG6_C"/>
</dbReference>
<dbReference type="InterPro" id="IPR048368">
    <property type="entry name" value="COG6_N"/>
</dbReference>
<dbReference type="PANTHER" id="PTHR21506">
    <property type="entry name" value="COMPONENT OF OLIGOMERIC GOLGI COMPLEX 6"/>
    <property type="match status" value="1"/>
</dbReference>
<dbReference type="PANTHER" id="PTHR21506:SF0">
    <property type="entry name" value="CONSERVED OLIGOMERIC GOLGI COMPLEX SUBUNIT 6"/>
    <property type="match status" value="1"/>
</dbReference>
<dbReference type="Pfam" id="PF20653">
    <property type="entry name" value="COG6_C"/>
    <property type="match status" value="1"/>
</dbReference>
<dbReference type="Pfam" id="PF06419">
    <property type="entry name" value="COG6_N"/>
    <property type="match status" value="1"/>
</dbReference>
<dbReference type="SMART" id="SM01087">
    <property type="entry name" value="COG6"/>
    <property type="match status" value="1"/>
</dbReference>
<sequence>MDFVDFDTLNLSDDLPQPQRALSLPIATNIETFGRKFYNLNSLTRNLLKRDNNTDTEKSENQPQVAEKYANLSLSLIEDTKNADNDHQEPHSDIKISALSARLSRVLNNPLSDSQIRQIFGSLEDTLRSWDSILEPGALGSMSRRKLRGEIERTLIRNQTQTLKEYQPVIKNLRKLEENVDALRSASMGVVDSVNNDFESSEIFNSKMENLHRKKTAVVVKKQLLSAFRAKFTLNEYEEYTLENGDISDEFFTVLAKAEQVDQNCSILLSIDNSQLGVKTMARVNRLVTRASEKVVAYANRTLGNLYALNNRDRVRTLHQCFVYLRHRPHYLNSVLATFVGSRSKTLVDEFLGQANSRVAGSSPQSEEYQDPVRVIGDLLAYIHSVVVSESETISGIFSFENDSVDETSRKEFGEIMNDCVAKVLQSLAKPVRAKLEQIISREVRISVLFSIHHLAELYYIMFSKQIKQDHMGLVATIESLVESAELRIVTTVENKLTTIRNSNSAQLQLNIDLQPPEWIIDFYSEILPMLDQTHTESIFKDNSLVNMVVDQPIQIYEQHMENSQVKNFEKRDKYILQLNCLDLILSKIMPISVLTDKVILVNEKIKEVSDKLVETQVSSLLEESGLTDFYNIVNMICPINDDFFDVSIYEPITENKLFTEDNIRQVNSKIQAFLPTALLDIQQSLFKINSPLVVNEIITESAIKYSRFYGRFQLICDEYLKVPLLAWSDGEVATLLGVEDAYFDEQ</sequence>
<reference key="1">
    <citation type="journal article" date="2009" name="Nature">
        <title>Evolution of pathogenicity and sexual reproduction in eight Candida genomes.</title>
        <authorList>
            <person name="Butler G."/>
            <person name="Rasmussen M.D."/>
            <person name="Lin M.F."/>
            <person name="Santos M.A.S."/>
            <person name="Sakthikumar S."/>
            <person name="Munro C.A."/>
            <person name="Rheinbay E."/>
            <person name="Grabherr M."/>
            <person name="Forche A."/>
            <person name="Reedy J.L."/>
            <person name="Agrafioti I."/>
            <person name="Arnaud M.B."/>
            <person name="Bates S."/>
            <person name="Brown A.J.P."/>
            <person name="Brunke S."/>
            <person name="Costanzo M.C."/>
            <person name="Fitzpatrick D.A."/>
            <person name="de Groot P.W.J."/>
            <person name="Harris D."/>
            <person name="Hoyer L.L."/>
            <person name="Hube B."/>
            <person name="Klis F.M."/>
            <person name="Kodira C."/>
            <person name="Lennard N."/>
            <person name="Logue M.E."/>
            <person name="Martin R."/>
            <person name="Neiman A.M."/>
            <person name="Nikolaou E."/>
            <person name="Quail M.A."/>
            <person name="Quinn J."/>
            <person name="Santos M.C."/>
            <person name="Schmitzberger F.F."/>
            <person name="Sherlock G."/>
            <person name="Shah P."/>
            <person name="Silverstein K.A.T."/>
            <person name="Skrzypek M.S."/>
            <person name="Soll D."/>
            <person name="Staggs R."/>
            <person name="Stansfield I."/>
            <person name="Stumpf M.P.H."/>
            <person name="Sudbery P.E."/>
            <person name="Srikantha T."/>
            <person name="Zeng Q."/>
            <person name="Berman J."/>
            <person name="Berriman M."/>
            <person name="Heitman J."/>
            <person name="Gow N.A.R."/>
            <person name="Lorenz M.C."/>
            <person name="Birren B.W."/>
            <person name="Kellis M."/>
            <person name="Cuomo C.A."/>
        </authorList>
    </citation>
    <scope>NUCLEOTIDE SEQUENCE [LARGE SCALE GENOMIC DNA]</scope>
    <source>
        <strain>ATCC 6260 / CBS 566 / DSM 6381 / JCM 1539 / NBRC 10279 / NRRL Y-324</strain>
    </source>
</reference>
<evidence type="ECO:0000250" key="1"/>
<evidence type="ECO:0000305" key="2"/>
<keyword id="KW-0333">Golgi apparatus</keyword>
<keyword id="KW-0472">Membrane</keyword>
<keyword id="KW-0653">Protein transport</keyword>
<keyword id="KW-1185">Reference proteome</keyword>
<keyword id="KW-0813">Transport</keyword>
<name>COG6_PICGU</name>
<gene>
    <name type="primary">COG6</name>
    <name type="ORF">PGUG_03657</name>
</gene>
<organism>
    <name type="scientific">Meyerozyma guilliermondii (strain ATCC 6260 / CBS 566 / DSM 6381 / JCM 1539 / NBRC 10279 / NRRL Y-324)</name>
    <name type="common">Yeast</name>
    <name type="synonym">Candida guilliermondii</name>
    <dbReference type="NCBI Taxonomy" id="294746"/>
    <lineage>
        <taxon>Eukaryota</taxon>
        <taxon>Fungi</taxon>
        <taxon>Dikarya</taxon>
        <taxon>Ascomycota</taxon>
        <taxon>Saccharomycotina</taxon>
        <taxon>Pichiomycetes</taxon>
        <taxon>Debaryomycetaceae</taxon>
        <taxon>Meyerozyma</taxon>
    </lineage>
</organism>
<proteinExistence type="inferred from homology"/>
<accession>A5DK56</accession>